<organism>
    <name type="scientific">Arabidopsis thaliana</name>
    <name type="common">Mouse-ear cress</name>
    <dbReference type="NCBI Taxonomy" id="3702"/>
    <lineage>
        <taxon>Eukaryota</taxon>
        <taxon>Viridiplantae</taxon>
        <taxon>Streptophyta</taxon>
        <taxon>Embryophyta</taxon>
        <taxon>Tracheophyta</taxon>
        <taxon>Spermatophyta</taxon>
        <taxon>Magnoliopsida</taxon>
        <taxon>eudicotyledons</taxon>
        <taxon>Gunneridae</taxon>
        <taxon>Pentapetalae</taxon>
        <taxon>rosids</taxon>
        <taxon>malvids</taxon>
        <taxon>Brassicales</taxon>
        <taxon>Brassicaceae</taxon>
        <taxon>Camelineae</taxon>
        <taxon>Arabidopsis</taxon>
    </lineage>
</organism>
<feature type="chain" id="PRO_0000167626" description="NADH-cytochrome b5 reductase-like protein">
    <location>
        <begin position="1"/>
        <end position="328"/>
    </location>
</feature>
<feature type="domain" description="FAD-binding FR-type" evidence="4">
    <location>
        <begin position="76"/>
        <end position="184"/>
    </location>
</feature>
<feature type="modified residue" description="Phosphothreonine" evidence="9">
    <location>
        <position position="201"/>
    </location>
</feature>
<dbReference type="EC" id="1.6.2.2"/>
<dbReference type="EMBL" id="AF296836">
    <property type="status" value="NOT_ANNOTATED_CDS"/>
    <property type="molecule type" value="Genomic_DNA"/>
</dbReference>
<dbReference type="EMBL" id="CP002688">
    <property type="protein sequence ID" value="AED92791.1"/>
    <property type="molecule type" value="Genomic_DNA"/>
</dbReference>
<dbReference type="EMBL" id="AY087280">
    <property type="protein sequence ID" value="AAM64833.1"/>
    <property type="molecule type" value="mRNA"/>
</dbReference>
<dbReference type="RefSeq" id="NP_568391.1">
    <property type="nucleotide sequence ID" value="NM_122015.5"/>
</dbReference>
<dbReference type="SMR" id="P83291"/>
<dbReference type="BioGRID" id="17406">
    <property type="interactions" value="1"/>
</dbReference>
<dbReference type="FunCoup" id="P83291">
    <property type="interactions" value="2260"/>
</dbReference>
<dbReference type="STRING" id="3702.P83291"/>
<dbReference type="iPTMnet" id="P83291"/>
<dbReference type="PaxDb" id="3702-AT5G20080.1"/>
<dbReference type="ProteomicsDB" id="251049"/>
<dbReference type="EnsemblPlants" id="AT5G20080.1">
    <property type="protein sequence ID" value="AT5G20080.1"/>
    <property type="gene ID" value="AT5G20080"/>
</dbReference>
<dbReference type="GeneID" id="832130"/>
<dbReference type="Gramene" id="AT5G20080.1">
    <property type="protein sequence ID" value="AT5G20080.1"/>
    <property type="gene ID" value="AT5G20080"/>
</dbReference>
<dbReference type="KEGG" id="ath:AT5G20080"/>
<dbReference type="Araport" id="AT5G20080"/>
<dbReference type="TAIR" id="AT5G20080"/>
<dbReference type="eggNOG" id="KOG0534">
    <property type="taxonomic scope" value="Eukaryota"/>
</dbReference>
<dbReference type="HOGENOM" id="CLU_003827_9_1_1"/>
<dbReference type="InParanoid" id="P83291"/>
<dbReference type="OMA" id="KGPEMQK"/>
<dbReference type="OrthoDB" id="432685at2759"/>
<dbReference type="PhylomeDB" id="P83291"/>
<dbReference type="BioCyc" id="ARA:AT5G20080-MONOMER"/>
<dbReference type="PRO" id="PR:P83291"/>
<dbReference type="Proteomes" id="UP000006548">
    <property type="component" value="Chromosome 5"/>
</dbReference>
<dbReference type="ExpressionAtlas" id="P83291">
    <property type="expression patterns" value="baseline and differential"/>
</dbReference>
<dbReference type="GO" id="GO:0005794">
    <property type="term" value="C:Golgi apparatus"/>
    <property type="evidence" value="ECO:0007005"/>
    <property type="project" value="TAIR"/>
</dbReference>
<dbReference type="GO" id="GO:0005758">
    <property type="term" value="C:mitochondrial intermembrane space"/>
    <property type="evidence" value="ECO:0000304"/>
    <property type="project" value="UniProtKB"/>
</dbReference>
<dbReference type="GO" id="GO:0005739">
    <property type="term" value="C:mitochondrion"/>
    <property type="evidence" value="ECO:0007005"/>
    <property type="project" value="TAIR"/>
</dbReference>
<dbReference type="GO" id="GO:0009505">
    <property type="term" value="C:plant-type cell wall"/>
    <property type="evidence" value="ECO:0007005"/>
    <property type="project" value="TAIR"/>
</dbReference>
<dbReference type="GO" id="GO:0009536">
    <property type="term" value="C:plastid"/>
    <property type="evidence" value="ECO:0007005"/>
    <property type="project" value="TAIR"/>
</dbReference>
<dbReference type="GO" id="GO:0005507">
    <property type="term" value="F:copper ion binding"/>
    <property type="evidence" value="ECO:0007005"/>
    <property type="project" value="TAIR"/>
</dbReference>
<dbReference type="GO" id="GO:0004128">
    <property type="term" value="F:cytochrome-b5 reductase activity, acting on NAD(P)H"/>
    <property type="evidence" value="ECO:0007669"/>
    <property type="project" value="UniProtKB-EC"/>
</dbReference>
<dbReference type="CDD" id="cd06183">
    <property type="entry name" value="cyt_b5_reduct_like"/>
    <property type="match status" value="1"/>
</dbReference>
<dbReference type="FunFam" id="2.40.30.10:FF:000032">
    <property type="entry name" value="NADH-cytochrome b5 reductase"/>
    <property type="match status" value="1"/>
</dbReference>
<dbReference type="FunFam" id="3.40.50.80:FF:000009">
    <property type="entry name" value="NADH-cytochrome b5 reductase"/>
    <property type="match status" value="1"/>
</dbReference>
<dbReference type="Gene3D" id="3.40.50.80">
    <property type="entry name" value="Nucleotide-binding domain of ferredoxin-NADP reductase (FNR) module"/>
    <property type="match status" value="1"/>
</dbReference>
<dbReference type="Gene3D" id="2.40.30.10">
    <property type="entry name" value="Translation factors"/>
    <property type="match status" value="1"/>
</dbReference>
<dbReference type="InterPro" id="IPR001834">
    <property type="entry name" value="CBR-like"/>
</dbReference>
<dbReference type="InterPro" id="IPR008333">
    <property type="entry name" value="Cbr1-like_FAD-bd_dom"/>
</dbReference>
<dbReference type="InterPro" id="IPR017927">
    <property type="entry name" value="FAD-bd_FR_type"/>
</dbReference>
<dbReference type="InterPro" id="IPR001709">
    <property type="entry name" value="Flavoprot_Pyr_Nucl_cyt_Rdtase"/>
</dbReference>
<dbReference type="InterPro" id="IPR039261">
    <property type="entry name" value="FNR_nucleotide-bd"/>
</dbReference>
<dbReference type="InterPro" id="IPR001433">
    <property type="entry name" value="OxRdtase_FAD/NAD-bd"/>
</dbReference>
<dbReference type="InterPro" id="IPR017938">
    <property type="entry name" value="Riboflavin_synthase-like_b-brl"/>
</dbReference>
<dbReference type="PANTHER" id="PTHR19370">
    <property type="entry name" value="NADH-CYTOCHROME B5 REDUCTASE"/>
    <property type="match status" value="1"/>
</dbReference>
<dbReference type="PANTHER" id="PTHR19370:SF171">
    <property type="entry name" value="NADH-CYTOCHROME B5 REDUCTASE 2"/>
    <property type="match status" value="1"/>
</dbReference>
<dbReference type="Pfam" id="PF00970">
    <property type="entry name" value="FAD_binding_6"/>
    <property type="match status" value="1"/>
</dbReference>
<dbReference type="Pfam" id="PF00175">
    <property type="entry name" value="NAD_binding_1"/>
    <property type="match status" value="1"/>
</dbReference>
<dbReference type="PRINTS" id="PR00406">
    <property type="entry name" value="CYTB5RDTASE"/>
</dbReference>
<dbReference type="PRINTS" id="PR00371">
    <property type="entry name" value="FPNCR"/>
</dbReference>
<dbReference type="SUPFAM" id="SSF52343">
    <property type="entry name" value="Ferredoxin reductase-like, C-terminal NADP-linked domain"/>
    <property type="match status" value="1"/>
</dbReference>
<dbReference type="SUPFAM" id="SSF63380">
    <property type="entry name" value="Riboflavin synthase domain-like"/>
    <property type="match status" value="1"/>
</dbReference>
<dbReference type="PROSITE" id="PS51384">
    <property type="entry name" value="FAD_FR"/>
    <property type="match status" value="1"/>
</dbReference>
<evidence type="ECO:0000250" key="1"/>
<evidence type="ECO:0000250" key="2">
    <source>
        <dbReference type="UniProtKB" id="P36060"/>
    </source>
</evidence>
<evidence type="ECO:0000255" key="3"/>
<evidence type="ECO:0000255" key="4">
    <source>
        <dbReference type="PROSITE-ProRule" id="PRU00716"/>
    </source>
</evidence>
<evidence type="ECO:0000269" key="5">
    <source>
    </source>
</evidence>
<evidence type="ECO:0000269" key="6">
    <source>
    </source>
</evidence>
<evidence type="ECO:0000269" key="7">
    <source>
    </source>
</evidence>
<evidence type="ECO:0000305" key="8"/>
<evidence type="ECO:0007744" key="9">
    <source>
    </source>
</evidence>
<sequence>MATSFFRRLARSAPITFPVAFGSQSKSGSGAFRFSTGAIAALSGGFSYYYLTSGNNLVYLDQAKEETGPKTALNPDKWLEFKLQDTARVSHNTQLFRFSFDPSAELGLHVASCLLTRAPLGYNAEGKTKYVIRPYTPISDPEAKGYFDLLIKVYPDGKMSQHFASLKPGDVLEVKGPVEKFKYSPNMKKHIGMIAGGSGITPMLQVIDAIVKNPEDNTQISLLYANVSPDDILLKQKLDVLQANHPNLKIFYTVDNPTKNWKGGVGYISKDMALKGLPLPTDDTLILVCGPPGMMEHISGGKAPDWSQGEVKGILKELGYTEEMVFKF</sequence>
<accession>P83291</accession>
<accession>Q8LBD3</accession>
<keyword id="KW-0903">Direct protein sequencing</keyword>
<keyword id="KW-0274">FAD</keyword>
<keyword id="KW-0285">Flavoprotein</keyword>
<keyword id="KW-0496">Mitochondrion</keyword>
<keyword id="KW-0520">NAD</keyword>
<keyword id="KW-0560">Oxidoreductase</keyword>
<keyword id="KW-0597">Phosphoprotein</keyword>
<keyword id="KW-1185">Reference proteome</keyword>
<proteinExistence type="evidence at protein level"/>
<reference key="1">
    <citation type="journal article" date="2000" name="Nature">
        <title>Sequence and analysis of chromosome 5 of the plant Arabidopsis thaliana.</title>
        <authorList>
            <person name="Tabata S."/>
            <person name="Kaneko T."/>
            <person name="Nakamura Y."/>
            <person name="Kotani H."/>
            <person name="Kato T."/>
            <person name="Asamizu E."/>
            <person name="Miyajima N."/>
            <person name="Sasamoto S."/>
            <person name="Kimura T."/>
            <person name="Hosouchi T."/>
            <person name="Kawashima K."/>
            <person name="Kohara M."/>
            <person name="Matsumoto M."/>
            <person name="Matsuno A."/>
            <person name="Muraki A."/>
            <person name="Nakayama S."/>
            <person name="Nakazaki N."/>
            <person name="Naruo K."/>
            <person name="Okumura S."/>
            <person name="Shinpo S."/>
            <person name="Takeuchi C."/>
            <person name="Wada T."/>
            <person name="Watanabe A."/>
            <person name="Yamada M."/>
            <person name="Yasuda M."/>
            <person name="Sato S."/>
            <person name="de la Bastide M."/>
            <person name="Huang E."/>
            <person name="Spiegel L."/>
            <person name="Gnoj L."/>
            <person name="O'Shaughnessy A."/>
            <person name="Preston R."/>
            <person name="Habermann K."/>
            <person name="Murray J."/>
            <person name="Johnson D."/>
            <person name="Rohlfing T."/>
            <person name="Nelson J."/>
            <person name="Stoneking T."/>
            <person name="Pepin K."/>
            <person name="Spieth J."/>
            <person name="Sekhon M."/>
            <person name="Armstrong J."/>
            <person name="Becker M."/>
            <person name="Belter E."/>
            <person name="Cordum H."/>
            <person name="Cordes M."/>
            <person name="Courtney L."/>
            <person name="Courtney W."/>
            <person name="Dante M."/>
            <person name="Du H."/>
            <person name="Edwards J."/>
            <person name="Fryman J."/>
            <person name="Haakensen B."/>
            <person name="Lamar E."/>
            <person name="Latreille P."/>
            <person name="Leonard S."/>
            <person name="Meyer R."/>
            <person name="Mulvaney E."/>
            <person name="Ozersky P."/>
            <person name="Riley A."/>
            <person name="Strowmatt C."/>
            <person name="Wagner-McPherson C."/>
            <person name="Wollam A."/>
            <person name="Yoakum M."/>
            <person name="Bell M."/>
            <person name="Dedhia N."/>
            <person name="Parnell L."/>
            <person name="Shah R."/>
            <person name="Rodriguez M."/>
            <person name="Hoon See L."/>
            <person name="Vil D."/>
            <person name="Baker J."/>
            <person name="Kirchoff K."/>
            <person name="Toth K."/>
            <person name="King L."/>
            <person name="Bahret A."/>
            <person name="Miller B."/>
            <person name="Marra M.A."/>
            <person name="Martienssen R."/>
            <person name="McCombie W.R."/>
            <person name="Wilson R.K."/>
            <person name="Murphy G."/>
            <person name="Bancroft I."/>
            <person name="Volckaert G."/>
            <person name="Wambutt R."/>
            <person name="Duesterhoeft A."/>
            <person name="Stiekema W."/>
            <person name="Pohl T."/>
            <person name="Entian K.-D."/>
            <person name="Terryn N."/>
            <person name="Hartley N."/>
            <person name="Bent E."/>
            <person name="Johnson S."/>
            <person name="Langham S.-A."/>
            <person name="McCullagh B."/>
            <person name="Robben J."/>
            <person name="Grymonprez B."/>
            <person name="Zimmermann W."/>
            <person name="Ramsperger U."/>
            <person name="Wedler H."/>
            <person name="Balke K."/>
            <person name="Wedler E."/>
            <person name="Peters S."/>
            <person name="van Staveren M."/>
            <person name="Dirkse W."/>
            <person name="Mooijman P."/>
            <person name="Klein Lankhorst R."/>
            <person name="Weitzenegger T."/>
            <person name="Bothe G."/>
            <person name="Rose M."/>
            <person name="Hauf J."/>
            <person name="Berneiser S."/>
            <person name="Hempel S."/>
            <person name="Feldpausch M."/>
            <person name="Lamberth S."/>
            <person name="Villarroel R."/>
            <person name="Gielen J."/>
            <person name="Ardiles W."/>
            <person name="Bents O."/>
            <person name="Lemcke K."/>
            <person name="Kolesov G."/>
            <person name="Mayer K.F.X."/>
            <person name="Rudd S."/>
            <person name="Schoof H."/>
            <person name="Schueller C."/>
            <person name="Zaccaria P."/>
            <person name="Mewes H.-W."/>
            <person name="Bevan M."/>
            <person name="Fransz P.F."/>
        </authorList>
    </citation>
    <scope>NUCLEOTIDE SEQUENCE [LARGE SCALE GENOMIC DNA]</scope>
    <source>
        <strain>cv. Columbia</strain>
    </source>
</reference>
<reference key="2">
    <citation type="journal article" date="2017" name="Plant J.">
        <title>Araport11: a complete reannotation of the Arabidopsis thaliana reference genome.</title>
        <authorList>
            <person name="Cheng C.Y."/>
            <person name="Krishnakumar V."/>
            <person name="Chan A.P."/>
            <person name="Thibaud-Nissen F."/>
            <person name="Schobel S."/>
            <person name="Town C.D."/>
        </authorList>
    </citation>
    <scope>GENOME REANNOTATION</scope>
    <source>
        <strain>cv. Columbia</strain>
    </source>
</reference>
<reference key="3">
    <citation type="submission" date="2002-03" db="EMBL/GenBank/DDBJ databases">
        <title>Full-length cDNA from Arabidopsis thaliana.</title>
        <authorList>
            <person name="Brover V.V."/>
            <person name="Troukhan M.E."/>
            <person name="Alexandrov N.A."/>
            <person name="Lu Y.-P."/>
            <person name="Flavell R.B."/>
            <person name="Feldmann K.A."/>
        </authorList>
    </citation>
    <scope>NUCLEOTIDE SEQUENCE [LARGE SCALE MRNA]</scope>
</reference>
<reference evidence="8" key="4">
    <citation type="journal article" date="2001" name="Plant Physiol.">
        <title>Proteomic approach to identify novel mitochondrial proteins in Arabidopsis.</title>
        <authorList>
            <person name="Kruft V."/>
            <person name="Eubel H."/>
            <person name="Jaensch L."/>
            <person name="Werhahn W."/>
            <person name="Braun H.-P."/>
        </authorList>
    </citation>
    <scope>PROTEIN SEQUENCE OF 61-74</scope>
    <scope>SUBCELLULAR LOCATION</scope>
    <source>
        <tissue evidence="5">Leaf</tissue>
        <tissue evidence="5">Stem</tissue>
    </source>
</reference>
<reference key="5">
    <citation type="journal article" date="2004" name="Plant Cell">
        <title>Experimental analysis of the Arabidopsis mitochondrial proteome highlights signaling and regulatory components, provides assessment of targeting prediction programs, and indicates plant-specific mitochondrial proteins.</title>
        <authorList>
            <person name="Heazlewood J.L."/>
            <person name="Tonti-Filippini J.S."/>
            <person name="Gout A.M."/>
            <person name="Day D.A."/>
            <person name="Whelan J."/>
            <person name="Millar A.H."/>
        </authorList>
    </citation>
    <scope>IDENTIFICATION BY MASS SPECTROMETRY</scope>
    <scope>SUBCELLULAR LOCATION [LARGE SCALE ANALYSIS]</scope>
    <source>
        <strain>cv. Landsberg erecta</strain>
    </source>
</reference>
<reference key="6">
    <citation type="journal article" date="2006" name="Plant J.">
        <title>A mutation in Arabidopsis cytochrome b5 reductase identified by high-throughput screening differentially affects hydroxylation and desaturation.</title>
        <authorList>
            <person name="Kumar R."/>
            <person name="Wallis J.G."/>
            <person name="Skidmore C."/>
            <person name="Browse J."/>
        </authorList>
    </citation>
    <scope>NOMENCLATURE</scope>
</reference>
<reference key="7">
    <citation type="journal article" date="2011" name="Plant Physiol.">
        <title>Multiple lines of evidence localize signaling, morphology, and lipid biosynthesis machinery to the mitochondrial outer membrane of Arabidopsis.</title>
        <authorList>
            <person name="Duncan O."/>
            <person name="Taylor N.L."/>
            <person name="Carrie C."/>
            <person name="Eubel H."/>
            <person name="Kubiszewski-Jakubiak S."/>
            <person name="Zhang B."/>
            <person name="Narsai R."/>
            <person name="Millar A.H."/>
            <person name="Whelan J."/>
        </authorList>
    </citation>
    <scope>SUBCELLULAR LOCATION</scope>
</reference>
<reference key="8">
    <citation type="journal article" date="2012" name="J. Proteome Res.">
        <title>Identification of phosphoproteins in Arabidopsis thaliana leaves using polyethylene glycol fractionation, immobilized metal-ion affinity chromatography, two-dimensional gel electrophoresis and mass spectrometry.</title>
        <authorList>
            <person name="Aryal U.K."/>
            <person name="Krochko J.E."/>
            <person name="Ross A.R."/>
        </authorList>
    </citation>
    <scope>PHOSPHORYLATION [LARGE SCALE ANALYSIS] AT THR-201</scope>
    <scope>IDENTIFICATION BY MASS SPECTROMETRY [LARGE SCALE ANALYSIS]</scope>
</reference>
<name>NB5R2_ARATH</name>
<protein>
    <recommendedName>
        <fullName>NADH-cytochrome b5 reductase-like protein</fullName>
        <shortName>B5R</shortName>
        <ecNumber>1.6.2.2</ecNumber>
    </recommendedName>
</protein>
<comment type="function">
    <text evidence="1">Desaturation and elongation of fatty acids.</text>
</comment>
<comment type="catalytic activity">
    <reaction>
        <text>2 Fe(III)-[cytochrome b5] + NADH = 2 Fe(II)-[cytochrome b5] + NAD(+) + H(+)</text>
        <dbReference type="Rhea" id="RHEA:46680"/>
        <dbReference type="Rhea" id="RHEA-COMP:10438"/>
        <dbReference type="Rhea" id="RHEA-COMP:10439"/>
        <dbReference type="ChEBI" id="CHEBI:15378"/>
        <dbReference type="ChEBI" id="CHEBI:29033"/>
        <dbReference type="ChEBI" id="CHEBI:29034"/>
        <dbReference type="ChEBI" id="CHEBI:57540"/>
        <dbReference type="ChEBI" id="CHEBI:57945"/>
        <dbReference type="EC" id="1.6.2.2"/>
    </reaction>
</comment>
<comment type="cofactor">
    <cofactor evidence="3">
        <name>FAD</name>
        <dbReference type="ChEBI" id="CHEBI:57692"/>
    </cofactor>
</comment>
<comment type="subcellular location">
    <subcellularLocation>
        <location evidence="5 6 7">Mitochondrion</location>
    </subcellularLocation>
</comment>
<comment type="similarity">
    <text evidence="2">Belongs to the flavoprotein pyridine nucleotide cytochrome reductase family.</text>
</comment>
<gene>
    <name type="primary">CBR2</name>
    <name type="ordered locus">At5g20080</name>
    <name type="ORF">F28I16.230</name>
</gene>